<sequence length="131" mass="14502">MDPRLPAWALVLLGPALVFALGPAPTPEMREKLCGHHFVRALVRVCGGPRWSTEARRPATGGDRELLQWLERRHLLHGLVADSNLTLGPGLQPLPQTSHHHRHHRAAATNPARYCCLSGCTQQDLLTLCPY</sequence>
<protein>
    <recommendedName>
        <fullName>Insulin-like 3</fullName>
    </recommendedName>
    <alternativeName>
        <fullName>Leydig insulin-like peptide</fullName>
        <shortName>Ley-I-L</shortName>
    </alternativeName>
    <alternativeName>
        <fullName>Relaxin-like factor</fullName>
    </alternativeName>
    <component>
        <recommendedName>
            <fullName>Insulin-like 3 B chain</fullName>
        </recommendedName>
    </component>
    <component>
        <recommendedName>
            <fullName>Insulin-like 3 A chain</fullName>
        </recommendedName>
    </component>
</protein>
<organism>
    <name type="scientific">Homo sapiens</name>
    <name type="common">Human</name>
    <dbReference type="NCBI Taxonomy" id="9606"/>
    <lineage>
        <taxon>Eukaryota</taxon>
        <taxon>Metazoa</taxon>
        <taxon>Chordata</taxon>
        <taxon>Craniata</taxon>
        <taxon>Vertebrata</taxon>
        <taxon>Euteleostomi</taxon>
        <taxon>Mammalia</taxon>
        <taxon>Eutheria</taxon>
        <taxon>Euarchontoglires</taxon>
        <taxon>Primates</taxon>
        <taxon>Haplorrhini</taxon>
        <taxon>Catarrhini</taxon>
        <taxon>Hominidae</taxon>
        <taxon>Homo</taxon>
    </lineage>
</organism>
<feature type="signal peptide" evidence="11">
    <location>
        <begin position="1"/>
        <end position="20"/>
    </location>
</feature>
<feature type="peptide" id="PRO_0000016140" description="Insulin-like 3 B chain">
    <location>
        <begin position="21"/>
        <end position="55"/>
    </location>
</feature>
<feature type="propeptide" id="PRO_0000016141" description="C peptide like" evidence="1">
    <location>
        <begin position="58"/>
        <end position="104"/>
    </location>
</feature>
<feature type="peptide" id="PRO_0000016142" description="Insulin-like 3 A chain">
    <location>
        <begin position="106"/>
        <end position="131"/>
    </location>
</feature>
<feature type="disulfide bond" description="Interchain (between B and A chains)">
    <location>
        <begin position="34"/>
        <end position="116"/>
    </location>
</feature>
<feature type="disulfide bond" description="Interchain (between B and A chains)">
    <location>
        <begin position="46"/>
        <end position="129"/>
    </location>
</feature>
<feature type="disulfide bond">
    <location>
        <begin position="115"/>
        <end position="120"/>
    </location>
</feature>
<feature type="splice variant" id="VSP_045526" description="In isoform 2." evidence="18">
    <original>RELLQWLERRHLLHGLVADSNLTLGPGLQPLPQTSHHHRHHRAAATNPARYCCLSGCTQQDLLTLCPY</original>
    <variation>QRESHSVSQAGLKLLSSSNPPTLTFQSVGISDVSCYSGWRDDICSMGWWPTVISRWDLACSPCPRPLTITATTVQLPPTLHATAASVAVPNKTC</variation>
    <location>
        <begin position="64"/>
        <end position="131"/>
    </location>
</feature>
<feature type="sequence variant" id="VAR_013231" description="In dbSNP:rs186828508." evidence="5">
    <original>A</original>
    <variation>G</variation>
    <location>
        <position position="24"/>
    </location>
</feature>
<feature type="sequence variant" id="VAR_013232" evidence="5">
    <original>V</original>
    <variation>L</variation>
    <location>
        <position position="43"/>
    </location>
</feature>
<feature type="sequence variant" id="VAR_013233" description="Found in a male with undermasculinised genitalia and intra-abdominal testes; uncertain significance; dbSNP:rs751299877." evidence="5">
    <original>P</original>
    <variation>S</variation>
    <location>
        <position position="49"/>
    </location>
</feature>
<feature type="sequence variant" id="VAR_013234" description="In dbSNP:rs6523." evidence="2 3 4 5 6 7 8 10 12 16 17">
    <original>T</original>
    <variation>A</variation>
    <location>
        <position position="60"/>
    </location>
</feature>
<feature type="sequence variant" id="VAR_013235" description="In CRYPTO; dbSNP:rs104894697." evidence="4">
    <original>P</original>
    <variation>L</variation>
    <location>
        <position position="93"/>
    </location>
</feature>
<feature type="sequence variant" id="VAR_013236" description="In CRYPTO; dbSNP:rs104894698." evidence="8">
    <original>R</original>
    <variation>C</variation>
    <location>
        <position position="102"/>
    </location>
</feature>
<feature type="sequence variant" id="VAR_013237" description="In dbSNP:rs121912556." evidence="5">
    <original>R</original>
    <variation>H</variation>
    <location>
        <position position="102"/>
    </location>
</feature>
<feature type="sequence variant" id="VAR_017122" description="In CRYPTO; dbSNP:rs121912555." evidence="9">
    <original>N</original>
    <variation>K</variation>
    <location>
        <position position="110"/>
    </location>
</feature>
<feature type="helix" evidence="20">
    <location>
        <begin position="36"/>
        <end position="46"/>
    </location>
</feature>
<feature type="turn" evidence="20">
    <location>
        <begin position="48"/>
        <end position="50"/>
    </location>
</feature>
<feature type="helix" evidence="20">
    <location>
        <begin position="111"/>
        <end position="117"/>
    </location>
</feature>
<feature type="helix" evidence="20">
    <location>
        <begin position="122"/>
        <end position="126"/>
    </location>
</feature>
<reference key="1">
    <citation type="journal article" date="1994" name="Hum. Genet.">
        <title>A human cDNA coding for the Leydig insulin-like peptide (Ley I-L).</title>
        <authorList>
            <person name="Burkhardt E."/>
            <person name="Adham I.M."/>
            <person name="Hobohm U."/>
            <person name="Murphy D."/>
            <person name="Sander C."/>
            <person name="Engel W."/>
        </authorList>
    </citation>
    <scope>NUCLEOTIDE SEQUENCE [MRNA] (ISOFORM 1)</scope>
    <scope>VARIANT ALA-60</scope>
    <source>
        <tissue>Testis</tissue>
    </source>
</reference>
<reference key="2">
    <citation type="journal article" date="1994" name="Genomics">
        <title>Structural organization of the porcine and human genes coding for a Leydig cell-specific insulin-like peptide (LEY I-L) and chromosomal localization of the human gene (INSL3).</title>
        <authorList>
            <person name="Burkhardt E."/>
            <person name="Adham I.M."/>
            <person name="Brosig B."/>
            <person name="Gastmann A."/>
            <person name="Mattei M.-G."/>
            <person name="Engel W."/>
        </authorList>
    </citation>
    <scope>NUCLEOTIDE SEQUENCE [GENOMIC DNA]</scope>
    <scope>VARIANT ALA-60</scope>
</reference>
<reference key="3">
    <citation type="journal article" date="1995" name="J. Clin. Endocrinol. Metab.">
        <title>The human Leydig insulin-like (hLEY I-L) gene is expressed in the corpus luteum and trophoblast.</title>
        <authorList>
            <person name="Tashima L.S."/>
            <person name="Hieber A.D."/>
            <person name="Greenwood F.C."/>
            <person name="Bryant-Greenwood G.D."/>
        </authorList>
    </citation>
    <scope>NUCLEOTIDE SEQUENCE [MRNA] (ISOFORM 1)</scope>
    <scope>TISSUE SPECIFICITY</scope>
</reference>
<reference key="4">
    <citation type="submission" date="2002-03" db="EMBL/GenBank/DDBJ databases">
        <title>A novel human relaxin-like factor: evidence for the evolution of new hormonal functions?</title>
        <authorList>
            <person name="Lim H.N."/>
            <person name="Oakenfull E.A."/>
            <person name="Rajpert De Meyts E."/>
            <person name="Skakkebaek N.E."/>
            <person name="Hughes I.A."/>
            <person name="Hawkins J.R."/>
            <person name="Farr C.J."/>
        </authorList>
    </citation>
    <scope>NUCLEOTIDE SEQUENCE [MRNA] (ISOFORM 2)</scope>
    <scope>ALTERNATIVE SPLICING</scope>
</reference>
<reference key="5">
    <citation type="journal article" date="2004" name="Nat. Genet.">
        <title>Complete sequencing and characterization of 21,243 full-length human cDNAs.</title>
        <authorList>
            <person name="Ota T."/>
            <person name="Suzuki Y."/>
            <person name="Nishikawa T."/>
            <person name="Otsuki T."/>
            <person name="Sugiyama T."/>
            <person name="Irie R."/>
            <person name="Wakamatsu A."/>
            <person name="Hayashi K."/>
            <person name="Sato H."/>
            <person name="Nagai K."/>
            <person name="Kimura K."/>
            <person name="Makita H."/>
            <person name="Sekine M."/>
            <person name="Obayashi M."/>
            <person name="Nishi T."/>
            <person name="Shibahara T."/>
            <person name="Tanaka T."/>
            <person name="Ishii S."/>
            <person name="Yamamoto J."/>
            <person name="Saito K."/>
            <person name="Kawai Y."/>
            <person name="Isono Y."/>
            <person name="Nakamura Y."/>
            <person name="Nagahari K."/>
            <person name="Murakami K."/>
            <person name="Yasuda T."/>
            <person name="Iwayanagi T."/>
            <person name="Wagatsuma M."/>
            <person name="Shiratori A."/>
            <person name="Sudo H."/>
            <person name="Hosoiri T."/>
            <person name="Kaku Y."/>
            <person name="Kodaira H."/>
            <person name="Kondo H."/>
            <person name="Sugawara M."/>
            <person name="Takahashi M."/>
            <person name="Kanda K."/>
            <person name="Yokoi T."/>
            <person name="Furuya T."/>
            <person name="Kikkawa E."/>
            <person name="Omura Y."/>
            <person name="Abe K."/>
            <person name="Kamihara K."/>
            <person name="Katsuta N."/>
            <person name="Sato K."/>
            <person name="Tanikawa M."/>
            <person name="Yamazaki M."/>
            <person name="Ninomiya K."/>
            <person name="Ishibashi T."/>
            <person name="Yamashita H."/>
            <person name="Murakawa K."/>
            <person name="Fujimori K."/>
            <person name="Tanai H."/>
            <person name="Kimata M."/>
            <person name="Watanabe M."/>
            <person name="Hiraoka S."/>
            <person name="Chiba Y."/>
            <person name="Ishida S."/>
            <person name="Ono Y."/>
            <person name="Takiguchi S."/>
            <person name="Watanabe S."/>
            <person name="Yosida M."/>
            <person name="Hotuta T."/>
            <person name="Kusano J."/>
            <person name="Kanehori K."/>
            <person name="Takahashi-Fujii A."/>
            <person name="Hara H."/>
            <person name="Tanase T.-O."/>
            <person name="Nomura Y."/>
            <person name="Togiya S."/>
            <person name="Komai F."/>
            <person name="Hara R."/>
            <person name="Takeuchi K."/>
            <person name="Arita M."/>
            <person name="Imose N."/>
            <person name="Musashino K."/>
            <person name="Yuuki H."/>
            <person name="Oshima A."/>
            <person name="Sasaki N."/>
            <person name="Aotsuka S."/>
            <person name="Yoshikawa Y."/>
            <person name="Matsunawa H."/>
            <person name="Ichihara T."/>
            <person name="Shiohata N."/>
            <person name="Sano S."/>
            <person name="Moriya S."/>
            <person name="Momiyama H."/>
            <person name="Satoh N."/>
            <person name="Takami S."/>
            <person name="Terashima Y."/>
            <person name="Suzuki O."/>
            <person name="Nakagawa S."/>
            <person name="Senoh A."/>
            <person name="Mizoguchi H."/>
            <person name="Goto Y."/>
            <person name="Shimizu F."/>
            <person name="Wakebe H."/>
            <person name="Hishigaki H."/>
            <person name="Watanabe T."/>
            <person name="Sugiyama A."/>
            <person name="Takemoto M."/>
            <person name="Kawakami B."/>
            <person name="Yamazaki M."/>
            <person name="Watanabe K."/>
            <person name="Kumagai A."/>
            <person name="Itakura S."/>
            <person name="Fukuzumi Y."/>
            <person name="Fujimori Y."/>
            <person name="Komiyama M."/>
            <person name="Tashiro H."/>
            <person name="Tanigami A."/>
            <person name="Fujiwara T."/>
            <person name="Ono T."/>
            <person name="Yamada K."/>
            <person name="Fujii Y."/>
            <person name="Ozaki K."/>
            <person name="Hirao M."/>
            <person name="Ohmori Y."/>
            <person name="Kawabata A."/>
            <person name="Hikiji T."/>
            <person name="Kobatake N."/>
            <person name="Inagaki H."/>
            <person name="Ikema Y."/>
            <person name="Okamoto S."/>
            <person name="Okitani R."/>
            <person name="Kawakami T."/>
            <person name="Noguchi S."/>
            <person name="Itoh T."/>
            <person name="Shigeta K."/>
            <person name="Senba T."/>
            <person name="Matsumura K."/>
            <person name="Nakajima Y."/>
            <person name="Mizuno T."/>
            <person name="Morinaga M."/>
            <person name="Sasaki M."/>
            <person name="Togashi T."/>
            <person name="Oyama M."/>
            <person name="Hata H."/>
            <person name="Watanabe M."/>
            <person name="Komatsu T."/>
            <person name="Mizushima-Sugano J."/>
            <person name="Satoh T."/>
            <person name="Shirai Y."/>
            <person name="Takahashi Y."/>
            <person name="Nakagawa K."/>
            <person name="Okumura K."/>
            <person name="Nagase T."/>
            <person name="Nomura N."/>
            <person name="Kikuchi H."/>
            <person name="Masuho Y."/>
            <person name="Yamashita R."/>
            <person name="Nakai K."/>
            <person name="Yada T."/>
            <person name="Nakamura Y."/>
            <person name="Ohara O."/>
            <person name="Isogai T."/>
            <person name="Sugano S."/>
        </authorList>
    </citation>
    <scope>NUCLEOTIDE SEQUENCE [LARGE SCALE MRNA] (ISOFORM 1)</scope>
    <scope>VARIANT ALA-60</scope>
    <source>
        <tissue>Testis</tissue>
    </source>
</reference>
<reference key="6">
    <citation type="journal article" date="2004" name="Nature">
        <title>The DNA sequence and biology of human chromosome 19.</title>
        <authorList>
            <person name="Grimwood J."/>
            <person name="Gordon L.A."/>
            <person name="Olsen A.S."/>
            <person name="Terry A."/>
            <person name="Schmutz J."/>
            <person name="Lamerdin J.E."/>
            <person name="Hellsten U."/>
            <person name="Goodstein D."/>
            <person name="Couronne O."/>
            <person name="Tran-Gyamfi M."/>
            <person name="Aerts A."/>
            <person name="Altherr M."/>
            <person name="Ashworth L."/>
            <person name="Bajorek E."/>
            <person name="Black S."/>
            <person name="Branscomb E."/>
            <person name="Caenepeel S."/>
            <person name="Carrano A.V."/>
            <person name="Caoile C."/>
            <person name="Chan Y.M."/>
            <person name="Christensen M."/>
            <person name="Cleland C.A."/>
            <person name="Copeland A."/>
            <person name="Dalin E."/>
            <person name="Dehal P."/>
            <person name="Denys M."/>
            <person name="Detter J.C."/>
            <person name="Escobar J."/>
            <person name="Flowers D."/>
            <person name="Fotopulos D."/>
            <person name="Garcia C."/>
            <person name="Georgescu A.M."/>
            <person name="Glavina T."/>
            <person name="Gomez M."/>
            <person name="Gonzales E."/>
            <person name="Groza M."/>
            <person name="Hammon N."/>
            <person name="Hawkins T."/>
            <person name="Haydu L."/>
            <person name="Ho I."/>
            <person name="Huang W."/>
            <person name="Israni S."/>
            <person name="Jett J."/>
            <person name="Kadner K."/>
            <person name="Kimball H."/>
            <person name="Kobayashi A."/>
            <person name="Larionov V."/>
            <person name="Leem S.-H."/>
            <person name="Lopez F."/>
            <person name="Lou Y."/>
            <person name="Lowry S."/>
            <person name="Malfatti S."/>
            <person name="Martinez D."/>
            <person name="McCready P.M."/>
            <person name="Medina C."/>
            <person name="Morgan J."/>
            <person name="Nelson K."/>
            <person name="Nolan M."/>
            <person name="Ovcharenko I."/>
            <person name="Pitluck S."/>
            <person name="Pollard M."/>
            <person name="Popkie A.P."/>
            <person name="Predki P."/>
            <person name="Quan G."/>
            <person name="Ramirez L."/>
            <person name="Rash S."/>
            <person name="Retterer J."/>
            <person name="Rodriguez A."/>
            <person name="Rogers S."/>
            <person name="Salamov A."/>
            <person name="Salazar A."/>
            <person name="She X."/>
            <person name="Smith D."/>
            <person name="Slezak T."/>
            <person name="Solovyev V."/>
            <person name="Thayer N."/>
            <person name="Tice H."/>
            <person name="Tsai M."/>
            <person name="Ustaszewska A."/>
            <person name="Vo N."/>
            <person name="Wagner M."/>
            <person name="Wheeler J."/>
            <person name="Wu K."/>
            <person name="Xie G."/>
            <person name="Yang J."/>
            <person name="Dubchak I."/>
            <person name="Furey T.S."/>
            <person name="DeJong P."/>
            <person name="Dickson M."/>
            <person name="Gordon D."/>
            <person name="Eichler E.E."/>
            <person name="Pennacchio L.A."/>
            <person name="Richardson P."/>
            <person name="Stubbs L."/>
            <person name="Rokhsar D.S."/>
            <person name="Myers R.M."/>
            <person name="Rubin E.M."/>
            <person name="Lucas S.M."/>
        </authorList>
    </citation>
    <scope>NUCLEOTIDE SEQUENCE [LARGE SCALE GENOMIC DNA]</scope>
</reference>
<reference key="7">
    <citation type="submission" date="2005-07" db="EMBL/GenBank/DDBJ databases">
        <authorList>
            <person name="Mural R.J."/>
            <person name="Istrail S."/>
            <person name="Sutton G."/>
            <person name="Florea L."/>
            <person name="Halpern A.L."/>
            <person name="Mobarry C.M."/>
            <person name="Lippert R."/>
            <person name="Walenz B."/>
            <person name="Shatkay H."/>
            <person name="Dew I."/>
            <person name="Miller J.R."/>
            <person name="Flanigan M.J."/>
            <person name="Edwards N.J."/>
            <person name="Bolanos R."/>
            <person name="Fasulo D."/>
            <person name="Halldorsson B.V."/>
            <person name="Hannenhalli S."/>
            <person name="Turner R."/>
            <person name="Yooseph S."/>
            <person name="Lu F."/>
            <person name="Nusskern D.R."/>
            <person name="Shue B.C."/>
            <person name="Zheng X.H."/>
            <person name="Zhong F."/>
            <person name="Delcher A.L."/>
            <person name="Huson D.H."/>
            <person name="Kravitz S.A."/>
            <person name="Mouchard L."/>
            <person name="Reinert K."/>
            <person name="Remington K.A."/>
            <person name="Clark A.G."/>
            <person name="Waterman M.S."/>
            <person name="Eichler E.E."/>
            <person name="Adams M.D."/>
            <person name="Hunkapiller M.W."/>
            <person name="Myers E.W."/>
            <person name="Venter J.C."/>
        </authorList>
    </citation>
    <scope>NUCLEOTIDE SEQUENCE [LARGE SCALE GENOMIC DNA]</scope>
</reference>
<reference key="8">
    <citation type="journal article" date="2004" name="Genome Res.">
        <title>The status, quality, and expansion of the NIH full-length cDNA project: the Mammalian Gene Collection (MGC).</title>
        <authorList>
            <consortium name="The MGC Project Team"/>
        </authorList>
    </citation>
    <scope>NUCLEOTIDE SEQUENCE [LARGE SCALE MRNA] (ISOFORM 1)</scope>
    <scope>VARIANT ALA-60</scope>
    <source>
        <tissue>Brain</tissue>
    </source>
</reference>
<reference key="9">
    <citation type="journal article" date="2004" name="Protein Sci.">
        <title>Signal peptide prediction based on analysis of experimentally verified cleavage sites.</title>
        <authorList>
            <person name="Zhang Z."/>
            <person name="Henzel W.J."/>
        </authorList>
    </citation>
    <scope>PROTEIN SEQUENCE OF 21-35</scope>
</reference>
<reference key="10">
    <citation type="journal article" date="2002" name="J. Biol. Chem.">
        <title>INSL3/Leydig insulin-like peptide activates the LGR8 receptor important in testis descent.</title>
        <authorList>
            <person name="Kumagai J."/>
            <person name="Hsu S.Y."/>
            <person name="Matsumi H."/>
            <person name="Roh J.-S."/>
            <person name="Fu P."/>
            <person name="Wade J.D."/>
            <person name="Bathgate R.A.D."/>
            <person name="Hsueh A.J.W."/>
        </authorList>
    </citation>
    <scope>INTERACTION WITH LGR8</scope>
</reference>
<reference key="11">
    <citation type="journal article" date="2006" name="J. Biol. Chem.">
        <title>Solution structure and characterization of the LGR8 receptor binding surface of insulin-like peptide 3.</title>
        <authorList>
            <person name="Rosengren K.J."/>
            <person name="Zhang S."/>
            <person name="Lin F."/>
            <person name="Daly N.L."/>
            <person name="Scott D.J."/>
            <person name="Hughes R.A."/>
            <person name="Bathgate R.A."/>
            <person name="Craik D.J."/>
            <person name="Wade J.D."/>
        </authorList>
    </citation>
    <scope>STRUCTURE BY NMR OF 25-55 AND 106-131</scope>
    <scope>SUBUNIT</scope>
    <scope>DISULFIDE BONDS</scope>
</reference>
<reference key="12">
    <citation type="journal article" date="2008" name="Biochemistry">
        <title>Solution structure of a conformationally restricted fully active derivative of the human relaxin-like factor.</title>
        <authorList>
            <person name="Bullesbach E.E."/>
            <person name="Hass M.A."/>
            <person name="Jensen M.R."/>
            <person name="Hansen D.F."/>
            <person name="Kristensen S.M."/>
            <person name="Schwabe C."/>
            <person name="Led J.J."/>
        </authorList>
    </citation>
    <scope>STRUCTURE BY NMR OF 25-55 AND 106-131</scope>
    <scope>SUBUNIT</scope>
    <scope>DISULFIDE BONDS</scope>
</reference>
<reference key="13">
    <citation type="journal article" date="2000" name="Mol. Hum. Reprod.">
        <title>Absence of mutations involving the INSL3 gene in human idiopathic cryptorchidism.</title>
        <authorList>
            <person name="Krausz C."/>
            <person name="Quintana-Murci L."/>
            <person name="Fellous M."/>
            <person name="Siffroi J.P."/>
            <person name="McElreavey K."/>
        </authorList>
    </citation>
    <scope>VARIANT ALA-60</scope>
</reference>
<reference key="14">
    <citation type="journal article" date="2000" name="J. Clin. Endocrinol. Metab.">
        <title>Insulin-like 3/relaxin-like factor gene mutations are associated with cryptorchidism.</title>
        <authorList>
            <person name="Tomboc M."/>
            <person name="Lee P.A."/>
            <person name="Mitwally M.F."/>
            <person name="Schneck F.X."/>
            <person name="Bellinger M."/>
            <person name="Witchel S.F."/>
        </authorList>
    </citation>
    <scope>VARIANT CRYPTO LEU-93</scope>
    <scope>VARIANT ALA-60</scope>
</reference>
<reference key="15">
    <citation type="journal article" date="2000" name="Pediatr. Res.">
        <title>A common polymorphism in the human relaxin-like factor (RLF) gene: no relationship with cryptorchidism.</title>
        <authorList>
            <person name="Koskimies P."/>
            <person name="Virtanen H."/>
            <person name="Lindstroem M."/>
            <person name="Kaleva M."/>
            <person name="Poutanen M."/>
            <person name="Huhtaniemi I."/>
            <person name="Toppari J."/>
        </authorList>
    </citation>
    <scope>VARIANT ALA-60</scope>
</reference>
<reference key="16">
    <citation type="journal article" date="2001" name="Am. J. Med. Genet.">
        <title>Novel insulin-like 3 (INSL3) gene mutation associated with human cryptorchidism.</title>
        <authorList>
            <person name="Marin P."/>
            <person name="Ferlin A."/>
            <person name="Moro E."/>
            <person name="Rossi A."/>
            <person name="Bartoloni L."/>
            <person name="Rossato M."/>
            <person name="Foresta C."/>
        </authorList>
    </citation>
    <scope>VARIANT CRYPTO CYS-102</scope>
    <scope>VARIANT ALA-60</scope>
</reference>
<reference key="17">
    <citation type="journal article" date="2001" name="Eur. J. Endocrinol.">
        <title>Genetic analysis of the INSL3 gene in patients with maldescent of the testis.</title>
        <authorList>
            <person name="Lim H.N."/>
            <person name="Raipert-de Meyts E."/>
            <person name="Skakkebaek N.E."/>
            <person name="Hawkins J.R."/>
            <person name="Hughes I.A."/>
        </authorList>
    </citation>
    <scope>VARIANTS GLY-24; LEU-43; SER-49; ALA-60 AND HIS-102</scope>
</reference>
<reference key="18">
    <citation type="journal article" date="2001" name="J. Endocrinol. Invest.">
        <title>Different insulin-like 3 (INSL3) gene mutations not associated with human cryptorchidism.</title>
        <authorList>
            <person name="Marin P."/>
            <person name="Ferlin A."/>
            <person name="Moro E."/>
            <person name="Garolla A."/>
            <person name="Foresta C."/>
        </authorList>
    </citation>
    <scope>VARIANT ALA-60</scope>
</reference>
<reference key="19">
    <citation type="journal article" date="2001" name="Pediatr. Int.">
        <title>Ala/Thr60 variant of the Leydig insulin-like hormone is not associated with cryptorchidism in the Japanese population.</title>
        <authorList>
            <person name="Takahashi I."/>
            <person name="Takahashi T."/>
            <person name="Komatsu M."/>
            <person name="Matsuda J."/>
            <person name="Takada G."/>
        </authorList>
    </citation>
    <scope>VARIANT ALA-60</scope>
</reference>
<reference key="20">
    <citation type="journal article" date="2003" name="J. Hum. Genet.">
        <title>A novel mutation of the insulin-like 3 gene in patients with cryptorchidism.</title>
        <authorList>
            <person name="Canto P."/>
            <person name="Escudero I."/>
            <person name="Soederlund D."/>
            <person name="Nishimura E."/>
            <person name="Carranza-Lira S."/>
            <person name="Gutierrez J."/>
            <person name="Nava A."/>
            <person name="Mendez J.P."/>
        </authorList>
    </citation>
    <scope>VARIANT CRYPTO LYS-110</scope>
</reference>
<comment type="function">
    <text>Seems to play a role in testicular function. May be a trophic hormone with a role in testicular descent in fetal life. Is a ligand for LGR8 receptor.</text>
</comment>
<comment type="subunit">
    <text evidence="13 14">Heterodimer of a B chain and an A chain linked by two disulfide bonds.</text>
</comment>
<comment type="interaction">
    <interactant intactId="EBI-12919766">
        <id>P51460</id>
    </interactant>
    <interactant intactId="EBI-2808472">
        <id>Q99622</id>
        <label>C12orf57</label>
    </interactant>
    <organismsDiffer>false</organismsDiffer>
    <experiments>3</experiments>
</comment>
<comment type="subcellular location">
    <subcellularLocation>
        <location>Secreted</location>
    </subcellularLocation>
</comment>
<comment type="alternative products">
    <event type="alternative splicing"/>
    <isoform>
        <id>P51460-1</id>
        <name>1</name>
        <sequence type="displayed"/>
    </isoform>
    <isoform>
        <id>P51460-2</id>
        <name>2</name>
        <sequence type="described" ref="VSP_045526"/>
    </isoform>
</comment>
<comment type="tissue specificity">
    <text evidence="15">Expressed in prenatal and postnatal Leydig cells. Found as well in the corpus luteum, trophoblast, fetal membranes and breast.</text>
</comment>
<comment type="disease" evidence="4 8 9">
    <disease id="DI-01455">
        <name>Cryptorchidism</name>
        <acronym>CRYPTO</acronym>
        <description>One of the most frequent congenital abnormalities in humans, involving 2-5% of male births. Cryptorchidism is associated with increased risk of infertility and testicular cancer.</description>
        <dbReference type="MIM" id="219050"/>
    </disease>
    <text>The disease may be caused by variants affecting the gene represented in this entry.</text>
</comment>
<comment type="similarity">
    <text evidence="19">Belongs to the insulin family.</text>
</comment>
<comment type="sequence caution" evidence="19">
    <conflict type="erroneous gene model prediction">
        <sequence resource="EMBL-CDS" id="CAA52017"/>
    </conflict>
</comment>
<evidence type="ECO:0000255" key="1"/>
<evidence type="ECO:0000269" key="2">
    <source>
    </source>
</evidence>
<evidence type="ECO:0000269" key="3">
    <source>
    </source>
</evidence>
<evidence type="ECO:0000269" key="4">
    <source>
    </source>
</evidence>
<evidence type="ECO:0000269" key="5">
    <source>
    </source>
</evidence>
<evidence type="ECO:0000269" key="6">
    <source>
    </source>
</evidence>
<evidence type="ECO:0000269" key="7">
    <source>
    </source>
</evidence>
<evidence type="ECO:0000269" key="8">
    <source>
    </source>
</evidence>
<evidence type="ECO:0000269" key="9">
    <source>
    </source>
</evidence>
<evidence type="ECO:0000269" key="10">
    <source>
    </source>
</evidence>
<evidence type="ECO:0000269" key="11">
    <source>
    </source>
</evidence>
<evidence type="ECO:0000269" key="12">
    <source>
    </source>
</evidence>
<evidence type="ECO:0000269" key="13">
    <source>
    </source>
</evidence>
<evidence type="ECO:0000269" key="14">
    <source>
    </source>
</evidence>
<evidence type="ECO:0000269" key="15">
    <source>
    </source>
</evidence>
<evidence type="ECO:0000269" key="16">
    <source>
    </source>
</evidence>
<evidence type="ECO:0000269" key="17">
    <source>
    </source>
</evidence>
<evidence type="ECO:0000303" key="18">
    <source ref="4"/>
</evidence>
<evidence type="ECO:0000305" key="19"/>
<evidence type="ECO:0007829" key="20">
    <source>
        <dbReference type="PDB" id="2H8B"/>
    </source>
</evidence>
<keyword id="KW-0002">3D-structure</keyword>
<keyword id="KW-0025">Alternative splicing</keyword>
<keyword id="KW-0165">Cleavage on pair of basic residues</keyword>
<keyword id="KW-0903">Direct protein sequencing</keyword>
<keyword id="KW-0225">Disease variant</keyword>
<keyword id="KW-1015">Disulfide bond</keyword>
<keyword id="KW-0372">Hormone</keyword>
<keyword id="KW-1267">Proteomics identification</keyword>
<keyword id="KW-1185">Reference proteome</keyword>
<keyword id="KW-0964">Secreted</keyword>
<keyword id="KW-0732">Signal</keyword>
<dbReference type="EMBL" id="S72482">
    <property type="protein sequence ID" value="AAB31371.1"/>
    <property type="molecule type" value="mRNA"/>
</dbReference>
<dbReference type="EMBL" id="X73637">
    <property type="protein sequence ID" value="CAA52017.1"/>
    <property type="status" value="ALT_SEQ"/>
    <property type="molecule type" value="Genomic_DNA"/>
</dbReference>
<dbReference type="EMBL" id="AY082014">
    <property type="protein sequence ID" value="AAL92559.1"/>
    <property type="molecule type" value="mRNA"/>
</dbReference>
<dbReference type="EMBL" id="AK302780">
    <property type="protein sequence ID" value="BAG63984.1"/>
    <property type="molecule type" value="mRNA"/>
</dbReference>
<dbReference type="EMBL" id="AC005952">
    <property type="status" value="NOT_ANNOTATED_CDS"/>
    <property type="molecule type" value="Genomic_DNA"/>
</dbReference>
<dbReference type="EMBL" id="AC007201">
    <property type="protein sequence ID" value="AAD22740.1"/>
    <property type="molecule type" value="Genomic_DNA"/>
</dbReference>
<dbReference type="EMBL" id="CH471106">
    <property type="protein sequence ID" value="EAW84635.1"/>
    <property type="molecule type" value="Genomic_DNA"/>
</dbReference>
<dbReference type="EMBL" id="BC032810">
    <property type="protein sequence ID" value="AAH32810.1"/>
    <property type="molecule type" value="mRNA"/>
</dbReference>
<dbReference type="EMBL" id="BC053345">
    <property type="protein sequence ID" value="AAH53345.1"/>
    <property type="molecule type" value="mRNA"/>
</dbReference>
<dbReference type="EMBL" id="BC071706">
    <property type="protein sequence ID" value="AAH71706.1"/>
    <property type="molecule type" value="mRNA"/>
</dbReference>
<dbReference type="EMBL" id="BC106721">
    <property type="protein sequence ID" value="AAI06722.1"/>
    <property type="molecule type" value="mRNA"/>
</dbReference>
<dbReference type="EMBL" id="BC106722">
    <property type="protein sequence ID" value="AAI06723.1"/>
    <property type="molecule type" value="mRNA"/>
</dbReference>
<dbReference type="CCDS" id="CCDS12365.1">
    <molecule id="P51460-1"/>
</dbReference>
<dbReference type="CCDS" id="CCDS58655.1">
    <molecule id="P51460-2"/>
</dbReference>
<dbReference type="PIR" id="B53024">
    <property type="entry name" value="B53024"/>
</dbReference>
<dbReference type="RefSeq" id="NP_001252516.1">
    <molecule id="P51460-2"/>
    <property type="nucleotide sequence ID" value="NM_001265587.2"/>
</dbReference>
<dbReference type="RefSeq" id="NP_005534.2">
    <molecule id="P51460-1"/>
    <property type="nucleotide sequence ID" value="NM_005543.3"/>
</dbReference>
<dbReference type="PDB" id="2H8B">
    <property type="method" value="NMR"/>
    <property type="chains" value="A=106-131, B=25-55"/>
</dbReference>
<dbReference type="PDB" id="2K6T">
    <property type="method" value="NMR"/>
    <property type="chains" value="A=106-131, B=25-55"/>
</dbReference>
<dbReference type="PDB" id="2K6U">
    <property type="method" value="NMR"/>
    <property type="chains" value="A=106-131, B=25-49"/>
</dbReference>
<dbReference type="PDBsum" id="2H8B"/>
<dbReference type="PDBsum" id="2K6T"/>
<dbReference type="PDBsum" id="2K6U"/>
<dbReference type="BMRB" id="P51460"/>
<dbReference type="SMR" id="P51460"/>
<dbReference type="BioGRID" id="109851">
    <property type="interactions" value="22"/>
</dbReference>
<dbReference type="FunCoup" id="P51460">
    <property type="interactions" value="573"/>
</dbReference>
<dbReference type="IntAct" id="P51460">
    <property type="interactions" value="15"/>
</dbReference>
<dbReference type="STRING" id="9606.ENSP00000369017"/>
<dbReference type="GlyGen" id="P51460">
    <property type="glycosylation" value="1 site"/>
</dbReference>
<dbReference type="SwissPalm" id="P51460"/>
<dbReference type="BioMuta" id="INSL3"/>
<dbReference type="DMDM" id="317373369"/>
<dbReference type="MassIVE" id="P51460"/>
<dbReference type="PaxDb" id="9606-ENSP00000369017"/>
<dbReference type="PeptideAtlas" id="P51460"/>
<dbReference type="ProteomicsDB" id="33737"/>
<dbReference type="ProteomicsDB" id="56309">
    <molecule id="P51460-1"/>
</dbReference>
<dbReference type="Antibodypedia" id="35351">
    <property type="antibodies" value="187 antibodies from 27 providers"/>
</dbReference>
<dbReference type="DNASU" id="3640"/>
<dbReference type="Ensembl" id="ENST00000317306.8">
    <molecule id="P51460-1"/>
    <property type="protein sequence ID" value="ENSP00000321724.6"/>
    <property type="gene ID" value="ENSG00000248099.4"/>
</dbReference>
<dbReference type="Ensembl" id="ENST00000379695.5">
    <molecule id="P51460-2"/>
    <property type="protein sequence ID" value="ENSP00000369017.4"/>
    <property type="gene ID" value="ENSG00000248099.4"/>
</dbReference>
<dbReference type="GeneID" id="3640"/>
<dbReference type="KEGG" id="hsa:3640"/>
<dbReference type="MANE-Select" id="ENST00000317306.8">
    <property type="protein sequence ID" value="ENSP00000321724.6"/>
    <property type="RefSeq nucleotide sequence ID" value="NM_005543.4"/>
    <property type="RefSeq protein sequence ID" value="NP_005534.2"/>
</dbReference>
<dbReference type="UCSC" id="uc002nhm.3">
    <molecule id="P51460-1"/>
    <property type="organism name" value="human"/>
</dbReference>
<dbReference type="AGR" id="HGNC:6086"/>
<dbReference type="CTD" id="3640"/>
<dbReference type="DisGeNET" id="3640"/>
<dbReference type="GeneCards" id="INSL3"/>
<dbReference type="HGNC" id="HGNC:6086">
    <property type="gene designation" value="INSL3"/>
</dbReference>
<dbReference type="HPA" id="ENSG00000248099">
    <property type="expression patterns" value="Group enriched (ovary, testis)"/>
</dbReference>
<dbReference type="MalaCards" id="INSL3"/>
<dbReference type="MIM" id="146738">
    <property type="type" value="gene"/>
</dbReference>
<dbReference type="MIM" id="219050">
    <property type="type" value="phenotype"/>
</dbReference>
<dbReference type="neXtProt" id="NX_P51460"/>
<dbReference type="OpenTargets" id="ENSG00000248099"/>
<dbReference type="PharmGKB" id="PA29893"/>
<dbReference type="VEuPathDB" id="HostDB:ENSG00000248099"/>
<dbReference type="eggNOG" id="ENOG502TFQJ">
    <property type="taxonomic scope" value="Eukaryota"/>
</dbReference>
<dbReference type="GeneTree" id="ENSGT00940000163613"/>
<dbReference type="HOGENOM" id="CLU_164865_0_0_1"/>
<dbReference type="InParanoid" id="P51460"/>
<dbReference type="OMA" id="NPAHHCC"/>
<dbReference type="OrthoDB" id="9448185at2759"/>
<dbReference type="PAN-GO" id="P51460">
    <property type="GO annotations" value="3 GO annotations based on evolutionary models"/>
</dbReference>
<dbReference type="PhylomeDB" id="P51460"/>
<dbReference type="TreeFam" id="TF106361"/>
<dbReference type="PathwayCommons" id="P51460"/>
<dbReference type="Reactome" id="R-HSA-418555">
    <property type="pathway name" value="G alpha (s) signalling events"/>
</dbReference>
<dbReference type="Reactome" id="R-HSA-444821">
    <property type="pathway name" value="Relaxin receptors"/>
</dbReference>
<dbReference type="SignaLink" id="P51460"/>
<dbReference type="BioGRID-ORCS" id="3640">
    <property type="hits" value="12 hits in 1144 CRISPR screens"/>
</dbReference>
<dbReference type="EvolutionaryTrace" id="P51460"/>
<dbReference type="GeneWiki" id="INSL3"/>
<dbReference type="GenomeRNAi" id="3640"/>
<dbReference type="Pharos" id="P51460">
    <property type="development level" value="Tbio"/>
</dbReference>
<dbReference type="PRO" id="PR:P51460"/>
<dbReference type="Proteomes" id="UP000005640">
    <property type="component" value="Chromosome 19"/>
</dbReference>
<dbReference type="RNAct" id="P51460">
    <property type="molecule type" value="protein"/>
</dbReference>
<dbReference type="Bgee" id="ENSG00000248099">
    <property type="expression patterns" value="Expressed in adult organism and 110 other cell types or tissues"/>
</dbReference>
<dbReference type="ExpressionAtlas" id="P51460">
    <property type="expression patterns" value="baseline and differential"/>
</dbReference>
<dbReference type="GO" id="GO:0005576">
    <property type="term" value="C:extracellular region"/>
    <property type="evidence" value="ECO:0000304"/>
    <property type="project" value="Reactome"/>
</dbReference>
<dbReference type="GO" id="GO:0005615">
    <property type="term" value="C:extracellular space"/>
    <property type="evidence" value="ECO:0000318"/>
    <property type="project" value="GO_Central"/>
</dbReference>
<dbReference type="GO" id="GO:0005179">
    <property type="term" value="F:hormone activity"/>
    <property type="evidence" value="ECO:0007669"/>
    <property type="project" value="UniProtKB-KW"/>
</dbReference>
<dbReference type="GO" id="GO:0005158">
    <property type="term" value="F:insulin receptor binding"/>
    <property type="evidence" value="ECO:0000304"/>
    <property type="project" value="ProtInc"/>
</dbReference>
<dbReference type="GO" id="GO:0002020">
    <property type="term" value="F:protease binding"/>
    <property type="evidence" value="ECO:0000353"/>
    <property type="project" value="UniProtKB"/>
</dbReference>
<dbReference type="GO" id="GO:0005102">
    <property type="term" value="F:signaling receptor binding"/>
    <property type="evidence" value="ECO:0000304"/>
    <property type="project" value="ProtInc"/>
</dbReference>
<dbReference type="GO" id="GO:0007193">
    <property type="term" value="P:adenylate cyclase-inhibiting G protein-coupled receptor signaling pathway"/>
    <property type="evidence" value="ECO:0000318"/>
    <property type="project" value="GO_Central"/>
</dbReference>
<dbReference type="GO" id="GO:0007267">
    <property type="term" value="P:cell-cell signaling"/>
    <property type="evidence" value="ECO:0000304"/>
    <property type="project" value="ProtInc"/>
</dbReference>
<dbReference type="GO" id="GO:0010634">
    <property type="term" value="P:positive regulation of epithelial cell migration"/>
    <property type="evidence" value="ECO:0000314"/>
    <property type="project" value="CACAO"/>
</dbReference>
<dbReference type="GO" id="GO:0090303">
    <property type="term" value="P:positive regulation of wound healing"/>
    <property type="evidence" value="ECO:0000314"/>
    <property type="project" value="CACAO"/>
</dbReference>
<dbReference type="GO" id="GO:0007283">
    <property type="term" value="P:spermatogenesis"/>
    <property type="evidence" value="ECO:0000304"/>
    <property type="project" value="ProtInc"/>
</dbReference>
<dbReference type="CDD" id="cd04365">
    <property type="entry name" value="IlGF_relaxin_like"/>
    <property type="match status" value="1"/>
</dbReference>
<dbReference type="Gene3D" id="1.10.100.10">
    <property type="entry name" value="Insulin-like"/>
    <property type="match status" value="1"/>
</dbReference>
<dbReference type="InterPro" id="IPR043387">
    <property type="entry name" value="INSL3/INSL4"/>
</dbReference>
<dbReference type="InterPro" id="IPR016179">
    <property type="entry name" value="Insulin-like"/>
</dbReference>
<dbReference type="InterPro" id="IPR036438">
    <property type="entry name" value="Insulin-like_sf"/>
</dbReference>
<dbReference type="InterPro" id="IPR022353">
    <property type="entry name" value="Insulin_CS"/>
</dbReference>
<dbReference type="PANTHER" id="PTHR10423">
    <property type="entry name" value="INSULIN-LIKE 3"/>
    <property type="match status" value="1"/>
</dbReference>
<dbReference type="PANTHER" id="PTHR10423:SF6">
    <property type="entry name" value="INSULIN-LIKE 3"/>
    <property type="match status" value="1"/>
</dbReference>
<dbReference type="Pfam" id="PF00049">
    <property type="entry name" value="Insulin"/>
    <property type="match status" value="1"/>
</dbReference>
<dbReference type="SMART" id="SM00078">
    <property type="entry name" value="IlGF"/>
    <property type="match status" value="1"/>
</dbReference>
<dbReference type="SUPFAM" id="SSF56994">
    <property type="entry name" value="Insulin-like"/>
    <property type="match status" value="1"/>
</dbReference>
<dbReference type="PROSITE" id="PS00262">
    <property type="entry name" value="INSULIN"/>
    <property type="match status" value="1"/>
</dbReference>
<proteinExistence type="evidence at protein level"/>
<gene>
    <name type="primary">INSL3</name>
    <name type="synonym">RLF</name>
    <name type="synonym">RLNL</name>
</gene>
<name>INSL3_HUMAN</name>
<accession>P51460</accession>
<accession>B4DZ72</accession>
<accession>G3XAG0</accession>
<accession>Q3KPI5</accession>
<accession>Q3KPI6</accession>
<accession>Q6YNB5</accession>
<accession>Q9UEA2</accession>
<accession>Q9UPH6</accession>